<gene>
    <name evidence="1" type="primary">murQ</name>
    <name type="ordered locus">PG_1099</name>
</gene>
<sequence>MFEKITEQPSLYDRLEEKSTREILEDINREDRKVAEAVSRTIPMIERLVEQIIPRMEQGGRLFYMGAGTSGRLGVLDASEIPPTFGMPPTFVIGLIAGGDRALRNPVEKAEDNTERGWEELLSHGVNSSDTVIGIAASGTTPYVIGALREARRHGILTGCICSNIESPLAAEADCPIEVIVGPEYVTGSSRMKSGTAQKMILNMISTSIMIRLGRVKGNRMVNMQLSNNKLIDRGTRMLMSEFDLSYEDARTLLLRYGSVRIASESMKQKPPKK</sequence>
<name>MURQ_PORGI</name>
<feature type="chain" id="PRO_0000249640" description="N-acetylmuramic acid 6-phosphate etherase">
    <location>
        <begin position="1"/>
        <end position="274"/>
    </location>
</feature>
<feature type="domain" description="SIS" evidence="1">
    <location>
        <begin position="52"/>
        <end position="215"/>
    </location>
</feature>
<feature type="active site" description="Proton donor" evidence="1">
    <location>
        <position position="80"/>
    </location>
</feature>
<feature type="active site" evidence="1">
    <location>
        <position position="111"/>
    </location>
</feature>
<comment type="function">
    <text evidence="1">Specifically catalyzes the cleavage of the D-lactyl ether substituent of MurNAc 6-phosphate, producing GlcNAc 6-phosphate and D-lactate.</text>
</comment>
<comment type="catalytic activity">
    <reaction evidence="1">
        <text>N-acetyl-D-muramate 6-phosphate + H2O = N-acetyl-D-glucosamine 6-phosphate + (R)-lactate</text>
        <dbReference type="Rhea" id="RHEA:26410"/>
        <dbReference type="ChEBI" id="CHEBI:15377"/>
        <dbReference type="ChEBI" id="CHEBI:16004"/>
        <dbReference type="ChEBI" id="CHEBI:57513"/>
        <dbReference type="ChEBI" id="CHEBI:58722"/>
        <dbReference type="EC" id="4.2.1.126"/>
    </reaction>
</comment>
<comment type="pathway">
    <text evidence="1">Amino-sugar metabolism; N-acetylmuramate degradation.</text>
</comment>
<comment type="subunit">
    <text evidence="1">Homodimer.</text>
</comment>
<comment type="miscellaneous">
    <text evidence="1">A lyase-type mechanism (elimination/hydration) is suggested for the cleavage of the lactyl ether bond of MurNAc 6-phosphate, with the formation of an alpha,beta-unsaturated aldehyde intermediate with (E)-stereochemistry, followed by the syn addition of water to give product.</text>
</comment>
<comment type="similarity">
    <text evidence="1">Belongs to the GCKR-like family. MurNAc-6-P etherase subfamily.</text>
</comment>
<proteinExistence type="inferred from homology"/>
<accession>Q7MVG5</accession>
<protein>
    <recommendedName>
        <fullName evidence="1">N-acetylmuramic acid 6-phosphate etherase</fullName>
        <shortName evidence="1">MurNAc-6-P etherase</shortName>
        <ecNumber evidence="1">4.2.1.126</ecNumber>
    </recommendedName>
    <alternativeName>
        <fullName evidence="1">N-acetylmuramic acid 6-phosphate hydrolase</fullName>
    </alternativeName>
    <alternativeName>
        <fullName evidence="1">N-acetylmuramic acid 6-phosphate lyase</fullName>
    </alternativeName>
</protein>
<keyword id="KW-0119">Carbohydrate metabolism</keyword>
<keyword id="KW-0456">Lyase</keyword>
<keyword id="KW-1185">Reference proteome</keyword>
<reference key="1">
    <citation type="journal article" date="2003" name="J. Bacteriol.">
        <title>Complete genome sequence of the oral pathogenic bacterium Porphyromonas gingivalis strain W83.</title>
        <authorList>
            <person name="Nelson K.E."/>
            <person name="Fleischmann R.D."/>
            <person name="DeBoy R.T."/>
            <person name="Paulsen I.T."/>
            <person name="Fouts D.E."/>
            <person name="Eisen J.A."/>
            <person name="Daugherty S.C."/>
            <person name="Dodson R.J."/>
            <person name="Durkin A.S."/>
            <person name="Gwinn M.L."/>
            <person name="Haft D.H."/>
            <person name="Kolonay J.F."/>
            <person name="Nelson W.C."/>
            <person name="Mason T.M."/>
            <person name="Tallon L."/>
            <person name="Gray J."/>
            <person name="Granger D."/>
            <person name="Tettelin H."/>
            <person name="Dong H."/>
            <person name="Galvin J.L."/>
            <person name="Duncan M.J."/>
            <person name="Dewhirst F.E."/>
            <person name="Fraser C.M."/>
        </authorList>
    </citation>
    <scope>NUCLEOTIDE SEQUENCE [LARGE SCALE GENOMIC DNA]</scope>
    <source>
        <strain>ATCC BAA-308 / W83</strain>
    </source>
</reference>
<dbReference type="EC" id="4.2.1.126" evidence="1"/>
<dbReference type="EMBL" id="AE015924">
    <property type="protein sequence ID" value="AAQ66210.1"/>
    <property type="molecule type" value="Genomic_DNA"/>
</dbReference>
<dbReference type="RefSeq" id="WP_005873642.1">
    <property type="nucleotide sequence ID" value="NC_002950.2"/>
</dbReference>
<dbReference type="SMR" id="Q7MVG5"/>
<dbReference type="STRING" id="242619.PG_1099"/>
<dbReference type="EnsemblBacteria" id="AAQ66210">
    <property type="protein sequence ID" value="AAQ66210"/>
    <property type="gene ID" value="PG_1099"/>
</dbReference>
<dbReference type="KEGG" id="pgi:PG_1099"/>
<dbReference type="PATRIC" id="fig|242619.8.peg.1016"/>
<dbReference type="eggNOG" id="COG2103">
    <property type="taxonomic scope" value="Bacteria"/>
</dbReference>
<dbReference type="HOGENOM" id="CLU_049049_1_1_10"/>
<dbReference type="BioCyc" id="PGIN242619:G1G02-1027-MONOMER"/>
<dbReference type="UniPathway" id="UPA00342"/>
<dbReference type="Proteomes" id="UP000000588">
    <property type="component" value="Chromosome"/>
</dbReference>
<dbReference type="GO" id="GO:0097367">
    <property type="term" value="F:carbohydrate derivative binding"/>
    <property type="evidence" value="ECO:0007669"/>
    <property type="project" value="InterPro"/>
</dbReference>
<dbReference type="GO" id="GO:0016835">
    <property type="term" value="F:carbon-oxygen lyase activity"/>
    <property type="evidence" value="ECO:0007669"/>
    <property type="project" value="UniProtKB-UniRule"/>
</dbReference>
<dbReference type="GO" id="GO:0016803">
    <property type="term" value="F:ether hydrolase activity"/>
    <property type="evidence" value="ECO:0007669"/>
    <property type="project" value="TreeGrafter"/>
</dbReference>
<dbReference type="GO" id="GO:0046348">
    <property type="term" value="P:amino sugar catabolic process"/>
    <property type="evidence" value="ECO:0007669"/>
    <property type="project" value="InterPro"/>
</dbReference>
<dbReference type="GO" id="GO:0097173">
    <property type="term" value="P:N-acetylmuramic acid catabolic process"/>
    <property type="evidence" value="ECO:0007669"/>
    <property type="project" value="UniProtKB-UniPathway"/>
</dbReference>
<dbReference type="GO" id="GO:0009254">
    <property type="term" value="P:peptidoglycan turnover"/>
    <property type="evidence" value="ECO:0007669"/>
    <property type="project" value="TreeGrafter"/>
</dbReference>
<dbReference type="CDD" id="cd05007">
    <property type="entry name" value="SIS_Etherase"/>
    <property type="match status" value="1"/>
</dbReference>
<dbReference type="FunFam" id="3.40.50.10490:FF:000014">
    <property type="entry name" value="N-acetylmuramic acid 6-phosphate etherase"/>
    <property type="match status" value="1"/>
</dbReference>
<dbReference type="Gene3D" id="3.40.50.10490">
    <property type="entry name" value="Glucose-6-phosphate isomerase like protein, domain 1"/>
    <property type="match status" value="1"/>
</dbReference>
<dbReference type="HAMAP" id="MF_00068">
    <property type="entry name" value="MurQ"/>
    <property type="match status" value="1"/>
</dbReference>
<dbReference type="InterPro" id="IPR005488">
    <property type="entry name" value="Etherase_MurQ"/>
</dbReference>
<dbReference type="InterPro" id="IPR005486">
    <property type="entry name" value="Glucokinase_regulatory_CS"/>
</dbReference>
<dbReference type="InterPro" id="IPR040190">
    <property type="entry name" value="MURQ/GCKR"/>
</dbReference>
<dbReference type="InterPro" id="IPR001347">
    <property type="entry name" value="SIS_dom"/>
</dbReference>
<dbReference type="InterPro" id="IPR046348">
    <property type="entry name" value="SIS_dom_sf"/>
</dbReference>
<dbReference type="NCBIfam" id="TIGR00274">
    <property type="entry name" value="N-acetylmuramic acid 6-phosphate etherase"/>
    <property type="match status" value="1"/>
</dbReference>
<dbReference type="NCBIfam" id="NF003915">
    <property type="entry name" value="PRK05441.1"/>
    <property type="match status" value="1"/>
</dbReference>
<dbReference type="NCBIfam" id="NF009222">
    <property type="entry name" value="PRK12570.1"/>
    <property type="match status" value="1"/>
</dbReference>
<dbReference type="PANTHER" id="PTHR10088">
    <property type="entry name" value="GLUCOKINASE REGULATORY PROTEIN"/>
    <property type="match status" value="1"/>
</dbReference>
<dbReference type="PANTHER" id="PTHR10088:SF4">
    <property type="entry name" value="GLUCOKINASE REGULATORY PROTEIN"/>
    <property type="match status" value="1"/>
</dbReference>
<dbReference type="Pfam" id="PF22645">
    <property type="entry name" value="GKRP_SIS_N"/>
    <property type="match status" value="1"/>
</dbReference>
<dbReference type="SUPFAM" id="SSF53697">
    <property type="entry name" value="SIS domain"/>
    <property type="match status" value="1"/>
</dbReference>
<dbReference type="PROSITE" id="PS01272">
    <property type="entry name" value="GCKR"/>
    <property type="match status" value="1"/>
</dbReference>
<dbReference type="PROSITE" id="PS51464">
    <property type="entry name" value="SIS"/>
    <property type="match status" value="1"/>
</dbReference>
<evidence type="ECO:0000255" key="1">
    <source>
        <dbReference type="HAMAP-Rule" id="MF_00068"/>
    </source>
</evidence>
<organism>
    <name type="scientific">Porphyromonas gingivalis (strain ATCC BAA-308 / W83)</name>
    <dbReference type="NCBI Taxonomy" id="242619"/>
    <lineage>
        <taxon>Bacteria</taxon>
        <taxon>Pseudomonadati</taxon>
        <taxon>Bacteroidota</taxon>
        <taxon>Bacteroidia</taxon>
        <taxon>Bacteroidales</taxon>
        <taxon>Porphyromonadaceae</taxon>
        <taxon>Porphyromonas</taxon>
    </lineage>
</organism>